<dbReference type="EMBL" id="AAFI02000006">
    <property type="protein sequence ID" value="EAL71719.1"/>
    <property type="molecule type" value="Genomic_DNA"/>
</dbReference>
<dbReference type="RefSeq" id="XP_645761.1">
    <property type="nucleotide sequence ID" value="XM_640669.1"/>
</dbReference>
<dbReference type="PaxDb" id="44689-DDB0202747"/>
<dbReference type="EnsemblProtists" id="EAL71719">
    <property type="protein sequence ID" value="EAL71719"/>
    <property type="gene ID" value="DDB_G0271178"/>
</dbReference>
<dbReference type="GeneID" id="8617952"/>
<dbReference type="KEGG" id="ddi:DDB_G0271178"/>
<dbReference type="dictyBase" id="DDB_G0271178"/>
<dbReference type="VEuPathDB" id="AmoebaDB:DDB_G0271178"/>
<dbReference type="HOGENOM" id="CLU_167198_0_0_1"/>
<dbReference type="InParanoid" id="Q55B51"/>
<dbReference type="PhylomeDB" id="Q55B51"/>
<dbReference type="PRO" id="PR:Q55B51"/>
<dbReference type="Proteomes" id="UP000002195">
    <property type="component" value="Chromosome 2"/>
</dbReference>
<dbReference type="GO" id="GO:0007155">
    <property type="term" value="P:cell adhesion"/>
    <property type="evidence" value="ECO:0007669"/>
    <property type="project" value="InterPro"/>
</dbReference>
<dbReference type="InterPro" id="IPR008601">
    <property type="entry name" value="Dicty_CAD"/>
</dbReference>
<dbReference type="Pfam" id="PF05720">
    <property type="entry name" value="Dicty_CAD"/>
    <property type="match status" value="1"/>
</dbReference>
<proteinExistence type="inferred from homology"/>
<name>CSBL4_DICDI</name>
<reference key="1">
    <citation type="journal article" date="2002" name="Nature">
        <title>Sequence and analysis of chromosome 2 of Dictyostelium discoideum.</title>
        <authorList>
            <person name="Gloeckner G."/>
            <person name="Eichinger L."/>
            <person name="Szafranski K."/>
            <person name="Pachebat J.A."/>
            <person name="Bankier A.T."/>
            <person name="Dear P.H."/>
            <person name="Lehmann R."/>
            <person name="Baumgart C."/>
            <person name="Parra G."/>
            <person name="Abril J.F."/>
            <person name="Guigo R."/>
            <person name="Kumpf K."/>
            <person name="Tunggal B."/>
            <person name="Cox E.C."/>
            <person name="Quail M.A."/>
            <person name="Platzer M."/>
            <person name="Rosenthal A."/>
            <person name="Noegel A.A."/>
        </authorList>
    </citation>
    <scope>NUCLEOTIDE SEQUENCE [LARGE SCALE GENOMIC DNA]</scope>
    <source>
        <strain>AX4</strain>
    </source>
</reference>
<reference key="2">
    <citation type="journal article" date="2005" name="Nature">
        <title>The genome of the social amoeba Dictyostelium discoideum.</title>
        <authorList>
            <person name="Eichinger L."/>
            <person name="Pachebat J.A."/>
            <person name="Gloeckner G."/>
            <person name="Rajandream M.A."/>
            <person name="Sucgang R."/>
            <person name="Berriman M."/>
            <person name="Song J."/>
            <person name="Olsen R."/>
            <person name="Szafranski K."/>
            <person name="Xu Q."/>
            <person name="Tunggal B."/>
            <person name="Kummerfeld S."/>
            <person name="Madera M."/>
            <person name="Konfortov B.A."/>
            <person name="Rivero F."/>
            <person name="Bankier A.T."/>
            <person name="Lehmann R."/>
            <person name="Hamlin N."/>
            <person name="Davies R."/>
            <person name="Gaudet P."/>
            <person name="Fey P."/>
            <person name="Pilcher K."/>
            <person name="Chen G."/>
            <person name="Saunders D."/>
            <person name="Sodergren E.J."/>
            <person name="Davis P."/>
            <person name="Kerhornou A."/>
            <person name="Nie X."/>
            <person name="Hall N."/>
            <person name="Anjard C."/>
            <person name="Hemphill L."/>
            <person name="Bason N."/>
            <person name="Farbrother P."/>
            <person name="Desany B."/>
            <person name="Just E."/>
            <person name="Morio T."/>
            <person name="Rost R."/>
            <person name="Churcher C.M."/>
            <person name="Cooper J."/>
            <person name="Haydock S."/>
            <person name="van Driessche N."/>
            <person name="Cronin A."/>
            <person name="Goodhead I."/>
            <person name="Muzny D.M."/>
            <person name="Mourier T."/>
            <person name="Pain A."/>
            <person name="Lu M."/>
            <person name="Harper D."/>
            <person name="Lindsay R."/>
            <person name="Hauser H."/>
            <person name="James K.D."/>
            <person name="Quiles M."/>
            <person name="Madan Babu M."/>
            <person name="Saito T."/>
            <person name="Buchrieser C."/>
            <person name="Wardroper A."/>
            <person name="Felder M."/>
            <person name="Thangavelu M."/>
            <person name="Johnson D."/>
            <person name="Knights A."/>
            <person name="Loulseged H."/>
            <person name="Mungall K.L."/>
            <person name="Oliver K."/>
            <person name="Price C."/>
            <person name="Quail M.A."/>
            <person name="Urushihara H."/>
            <person name="Hernandez J."/>
            <person name="Rabbinowitsch E."/>
            <person name="Steffen D."/>
            <person name="Sanders M."/>
            <person name="Ma J."/>
            <person name="Kohara Y."/>
            <person name="Sharp S."/>
            <person name="Simmonds M.N."/>
            <person name="Spiegler S."/>
            <person name="Tivey A."/>
            <person name="Sugano S."/>
            <person name="White B."/>
            <person name="Walker D."/>
            <person name="Woodward J.R."/>
            <person name="Winckler T."/>
            <person name="Tanaka Y."/>
            <person name="Shaulsky G."/>
            <person name="Schleicher M."/>
            <person name="Weinstock G.M."/>
            <person name="Rosenthal A."/>
            <person name="Cox E.C."/>
            <person name="Chisholm R.L."/>
            <person name="Gibbs R.A."/>
            <person name="Loomis W.F."/>
            <person name="Platzer M."/>
            <person name="Kay R.R."/>
            <person name="Williams J.G."/>
            <person name="Dear P.H."/>
            <person name="Noegel A.A."/>
            <person name="Barrell B.G."/>
            <person name="Kuspa A."/>
        </authorList>
    </citation>
    <scope>NUCLEOTIDE SEQUENCE [LARGE SCALE GENOMIC DNA]</scope>
    <source>
        <strain>AX4</strain>
    </source>
</reference>
<protein>
    <recommendedName>
        <fullName>Uncharacterized protein csb family protein DDB_G0271178</fullName>
    </recommendedName>
</protein>
<organism>
    <name type="scientific">Dictyostelium discoideum</name>
    <name type="common">Social amoeba</name>
    <dbReference type="NCBI Taxonomy" id="44689"/>
    <lineage>
        <taxon>Eukaryota</taxon>
        <taxon>Amoebozoa</taxon>
        <taxon>Evosea</taxon>
        <taxon>Eumycetozoa</taxon>
        <taxon>Dictyostelia</taxon>
        <taxon>Dictyosteliales</taxon>
        <taxon>Dictyosteliaceae</taxon>
        <taxon>Dictyostelium</taxon>
    </lineage>
</organism>
<sequence>MAEEVPEFKITIFTDKGRSTISGTEYPLPILPYPAPYTFRLSGYTIEGPILTNKEFKVITGKIEYGGEEFDIPPSSKGSWRRADNLMNLIFVTIYLSRQPKKVFHY</sequence>
<gene>
    <name type="ORF">DDB_G0271178</name>
</gene>
<feature type="chain" id="PRO_0000312412" description="Uncharacterized protein csb family protein DDB_G0271178">
    <location>
        <begin position="1"/>
        <end position="106"/>
    </location>
</feature>
<accession>Q55B51</accession>
<evidence type="ECO:0000305" key="1"/>
<keyword id="KW-1185">Reference proteome</keyword>
<comment type="similarity">
    <text evidence="1">Belongs to the csb family.</text>
</comment>